<keyword id="KW-0378">Hydrolase</keyword>
<keyword id="KW-1185">Reference proteome</keyword>
<accession>B0C8Q6</accession>
<comment type="catalytic activity">
    <reaction>
        <text>an acyl phosphate + H2O = a carboxylate + phosphate + H(+)</text>
        <dbReference type="Rhea" id="RHEA:14965"/>
        <dbReference type="ChEBI" id="CHEBI:15377"/>
        <dbReference type="ChEBI" id="CHEBI:15378"/>
        <dbReference type="ChEBI" id="CHEBI:29067"/>
        <dbReference type="ChEBI" id="CHEBI:43474"/>
        <dbReference type="ChEBI" id="CHEBI:59918"/>
        <dbReference type="EC" id="3.6.1.7"/>
    </reaction>
</comment>
<comment type="similarity">
    <text evidence="2">Belongs to the acylphosphatase family.</text>
</comment>
<organism>
    <name type="scientific">Acaryochloris marina (strain MBIC 11017)</name>
    <dbReference type="NCBI Taxonomy" id="329726"/>
    <lineage>
        <taxon>Bacteria</taxon>
        <taxon>Bacillati</taxon>
        <taxon>Cyanobacteriota</taxon>
        <taxon>Cyanophyceae</taxon>
        <taxon>Acaryochloridales</taxon>
        <taxon>Acaryochloridaceae</taxon>
        <taxon>Acaryochloris</taxon>
    </lineage>
</organism>
<protein>
    <recommendedName>
        <fullName>Acylphosphatase</fullName>
        <ecNumber>3.6.1.7</ecNumber>
    </recommendedName>
    <alternativeName>
        <fullName>Acylphosphate phosphohydrolase</fullName>
    </alternativeName>
</protein>
<proteinExistence type="inferred from homology"/>
<name>ACYP_ACAM1</name>
<sequence length="93" mass="10338">MMPNIICLKAVISGKVQGVGYRYSTRAKAQSLGLVGWVRNLPDGRVEAMAEGERTQVDKLIEWFKQGPPAAEVSKVDVDEESLGEFRAFEILR</sequence>
<reference key="1">
    <citation type="journal article" date="2008" name="Proc. Natl. Acad. Sci. U.S.A.">
        <title>Niche adaptation and genome expansion in the chlorophyll d-producing cyanobacterium Acaryochloris marina.</title>
        <authorList>
            <person name="Swingley W.D."/>
            <person name="Chen M."/>
            <person name="Cheung P.C."/>
            <person name="Conrad A.L."/>
            <person name="Dejesa L.C."/>
            <person name="Hao J."/>
            <person name="Honchak B.M."/>
            <person name="Karbach L.E."/>
            <person name="Kurdoglu A."/>
            <person name="Lahiri S."/>
            <person name="Mastrian S.D."/>
            <person name="Miyashita H."/>
            <person name="Page L."/>
            <person name="Ramakrishna P."/>
            <person name="Satoh S."/>
            <person name="Sattley W.M."/>
            <person name="Shimada Y."/>
            <person name="Taylor H.L."/>
            <person name="Tomo T."/>
            <person name="Tsuchiya T."/>
            <person name="Wang Z.T."/>
            <person name="Raymond J."/>
            <person name="Mimuro M."/>
            <person name="Blankenship R.E."/>
            <person name="Touchman J.W."/>
        </authorList>
    </citation>
    <scope>NUCLEOTIDE SEQUENCE [LARGE SCALE GENOMIC DNA]</scope>
    <source>
        <strain>MBIC 11017</strain>
    </source>
</reference>
<reference key="2">
    <citation type="submission" date="2007-08" db="EMBL/GenBank/DDBJ databases">
        <authorList>
            <person name="Touchman J.W."/>
        </authorList>
    </citation>
    <scope>NUCLEOTIDE SEQUENCE [LARGE SCALE GENOMIC DNA]</scope>
</reference>
<feature type="chain" id="PRO_0000326637" description="Acylphosphatase">
    <location>
        <begin position="1"/>
        <end position="93"/>
    </location>
</feature>
<feature type="domain" description="Acylphosphatase-like" evidence="1">
    <location>
        <begin position="7"/>
        <end position="93"/>
    </location>
</feature>
<feature type="active site" evidence="1">
    <location>
        <position position="22"/>
    </location>
</feature>
<feature type="active site" evidence="1">
    <location>
        <position position="40"/>
    </location>
</feature>
<gene>
    <name type="primary">acyP</name>
    <name type="ordered locus">AM1_6388</name>
</gene>
<evidence type="ECO:0000255" key="1">
    <source>
        <dbReference type="PROSITE-ProRule" id="PRU00520"/>
    </source>
</evidence>
<evidence type="ECO:0000305" key="2"/>
<dbReference type="EC" id="3.6.1.7"/>
<dbReference type="EMBL" id="CP000828">
    <property type="protein sequence ID" value="ABW31318.1"/>
    <property type="molecule type" value="Genomic_DNA"/>
</dbReference>
<dbReference type="RefSeq" id="WP_012166492.1">
    <property type="nucleotide sequence ID" value="NC_009925.1"/>
</dbReference>
<dbReference type="SMR" id="B0C8Q6"/>
<dbReference type="STRING" id="329726.AM1_6388"/>
<dbReference type="KEGG" id="amr:AM1_6388"/>
<dbReference type="eggNOG" id="COG1254">
    <property type="taxonomic scope" value="Bacteria"/>
</dbReference>
<dbReference type="HOGENOM" id="CLU_141932_3_2_3"/>
<dbReference type="OrthoDB" id="9808093at2"/>
<dbReference type="Proteomes" id="UP000000268">
    <property type="component" value="Chromosome"/>
</dbReference>
<dbReference type="GO" id="GO:0003998">
    <property type="term" value="F:acylphosphatase activity"/>
    <property type="evidence" value="ECO:0007669"/>
    <property type="project" value="UniProtKB-EC"/>
</dbReference>
<dbReference type="Gene3D" id="3.30.70.100">
    <property type="match status" value="1"/>
</dbReference>
<dbReference type="InterPro" id="IPR020456">
    <property type="entry name" value="Acylphosphatase"/>
</dbReference>
<dbReference type="InterPro" id="IPR001792">
    <property type="entry name" value="Acylphosphatase-like_dom"/>
</dbReference>
<dbReference type="InterPro" id="IPR036046">
    <property type="entry name" value="Acylphosphatase-like_dom_sf"/>
</dbReference>
<dbReference type="InterPro" id="IPR017968">
    <property type="entry name" value="Acylphosphatase_CS"/>
</dbReference>
<dbReference type="NCBIfam" id="NF011000">
    <property type="entry name" value="PRK14426.1"/>
    <property type="match status" value="1"/>
</dbReference>
<dbReference type="NCBIfam" id="NF011014">
    <property type="entry name" value="PRK14442.1"/>
    <property type="match status" value="1"/>
</dbReference>
<dbReference type="PANTHER" id="PTHR47268">
    <property type="entry name" value="ACYLPHOSPHATASE"/>
    <property type="match status" value="1"/>
</dbReference>
<dbReference type="PANTHER" id="PTHR47268:SF4">
    <property type="entry name" value="ACYLPHOSPHATASE"/>
    <property type="match status" value="1"/>
</dbReference>
<dbReference type="Pfam" id="PF00708">
    <property type="entry name" value="Acylphosphatase"/>
    <property type="match status" value="1"/>
</dbReference>
<dbReference type="PRINTS" id="PR00112">
    <property type="entry name" value="ACYLPHPHTASE"/>
</dbReference>
<dbReference type="SUPFAM" id="SSF54975">
    <property type="entry name" value="Acylphosphatase/BLUF domain-like"/>
    <property type="match status" value="1"/>
</dbReference>
<dbReference type="PROSITE" id="PS00151">
    <property type="entry name" value="ACYLPHOSPHATASE_2"/>
    <property type="match status" value="1"/>
</dbReference>
<dbReference type="PROSITE" id="PS51160">
    <property type="entry name" value="ACYLPHOSPHATASE_3"/>
    <property type="match status" value="1"/>
</dbReference>